<gene>
    <name evidence="2" type="primary">folE</name>
    <name type="ordered locus">gbs1183</name>
</gene>
<sequence length="187" mass="21307">MPNQEKMEKAIYQFLEALGENPDREGLKDTPKRVAKMYIEMFSGLNQDPKEQFTAVFSENHEEVVIVKDIPFYSMCEHHLVPFYGKAHIAYLPNDGRVTGLSKLARAFEVASKRPQLQERLTAQVAQALEDALAPKGIFVMIEAEHMCMTMRGIKKPGSKTITTVARGLYKDDRYERQEILSLIQKG</sequence>
<evidence type="ECO:0000250" key="1"/>
<evidence type="ECO:0000255" key="2">
    <source>
        <dbReference type="HAMAP-Rule" id="MF_00223"/>
    </source>
</evidence>
<feature type="chain" id="PRO_0000119444" description="GTP cyclohydrolase 1">
    <location>
        <begin position="1"/>
        <end position="187"/>
    </location>
</feature>
<feature type="binding site" evidence="2">
    <location>
        <position position="76"/>
    </location>
    <ligand>
        <name>Zn(2+)</name>
        <dbReference type="ChEBI" id="CHEBI:29105"/>
    </ligand>
</feature>
<feature type="binding site" evidence="2">
    <location>
        <position position="79"/>
    </location>
    <ligand>
        <name>Zn(2+)</name>
        <dbReference type="ChEBI" id="CHEBI:29105"/>
    </ligand>
</feature>
<feature type="binding site" evidence="2">
    <location>
        <position position="148"/>
    </location>
    <ligand>
        <name>Zn(2+)</name>
        <dbReference type="ChEBI" id="CHEBI:29105"/>
    </ligand>
</feature>
<comment type="catalytic activity">
    <reaction evidence="2">
        <text>GTP + H2O = 7,8-dihydroneopterin 3'-triphosphate + formate + H(+)</text>
        <dbReference type="Rhea" id="RHEA:17473"/>
        <dbReference type="ChEBI" id="CHEBI:15377"/>
        <dbReference type="ChEBI" id="CHEBI:15378"/>
        <dbReference type="ChEBI" id="CHEBI:15740"/>
        <dbReference type="ChEBI" id="CHEBI:37565"/>
        <dbReference type="ChEBI" id="CHEBI:58462"/>
        <dbReference type="EC" id="3.5.4.16"/>
    </reaction>
</comment>
<comment type="pathway">
    <text evidence="2">Cofactor biosynthesis; 7,8-dihydroneopterin triphosphate biosynthesis; 7,8-dihydroneopterin triphosphate from GTP: step 1/1.</text>
</comment>
<comment type="subunit">
    <text evidence="1">Toroid-shaped homodecamer, composed of two pentamers of five dimers.</text>
</comment>
<comment type="similarity">
    <text evidence="2">Belongs to the GTP cyclohydrolase I family.</text>
</comment>
<name>GCH1_STRA3</name>
<keyword id="KW-0342">GTP-binding</keyword>
<keyword id="KW-0378">Hydrolase</keyword>
<keyword id="KW-0479">Metal-binding</keyword>
<keyword id="KW-0547">Nucleotide-binding</keyword>
<keyword id="KW-0554">One-carbon metabolism</keyword>
<keyword id="KW-0862">Zinc</keyword>
<proteinExistence type="inferred from homology"/>
<organism>
    <name type="scientific">Streptococcus agalactiae serotype III (strain NEM316)</name>
    <dbReference type="NCBI Taxonomy" id="211110"/>
    <lineage>
        <taxon>Bacteria</taxon>
        <taxon>Bacillati</taxon>
        <taxon>Bacillota</taxon>
        <taxon>Bacilli</taxon>
        <taxon>Lactobacillales</taxon>
        <taxon>Streptococcaceae</taxon>
        <taxon>Streptococcus</taxon>
    </lineage>
</organism>
<protein>
    <recommendedName>
        <fullName evidence="2">GTP cyclohydrolase 1</fullName>
        <ecNumber evidence="2">3.5.4.16</ecNumber>
    </recommendedName>
    <alternativeName>
        <fullName evidence="2">GTP cyclohydrolase I</fullName>
        <shortName evidence="2">GTP-CH-I</shortName>
    </alternativeName>
</protein>
<dbReference type="EC" id="3.5.4.16" evidence="2"/>
<dbReference type="EMBL" id="AL766849">
    <property type="protein sequence ID" value="CAD46842.1"/>
    <property type="molecule type" value="Genomic_DNA"/>
</dbReference>
<dbReference type="RefSeq" id="WP_001133584.1">
    <property type="nucleotide sequence ID" value="NC_004368.1"/>
</dbReference>
<dbReference type="SMR" id="Q8E549"/>
<dbReference type="KEGG" id="san:gbs1183"/>
<dbReference type="eggNOG" id="COG0302">
    <property type="taxonomic scope" value="Bacteria"/>
</dbReference>
<dbReference type="HOGENOM" id="CLU_049768_3_3_9"/>
<dbReference type="UniPathway" id="UPA00848">
    <property type="reaction ID" value="UER00151"/>
</dbReference>
<dbReference type="Proteomes" id="UP000000823">
    <property type="component" value="Chromosome"/>
</dbReference>
<dbReference type="GO" id="GO:0005737">
    <property type="term" value="C:cytoplasm"/>
    <property type="evidence" value="ECO:0007669"/>
    <property type="project" value="TreeGrafter"/>
</dbReference>
<dbReference type="GO" id="GO:0005525">
    <property type="term" value="F:GTP binding"/>
    <property type="evidence" value="ECO:0007669"/>
    <property type="project" value="UniProtKB-KW"/>
</dbReference>
<dbReference type="GO" id="GO:0003934">
    <property type="term" value="F:GTP cyclohydrolase I activity"/>
    <property type="evidence" value="ECO:0007669"/>
    <property type="project" value="UniProtKB-UniRule"/>
</dbReference>
<dbReference type="GO" id="GO:0008270">
    <property type="term" value="F:zinc ion binding"/>
    <property type="evidence" value="ECO:0007669"/>
    <property type="project" value="UniProtKB-UniRule"/>
</dbReference>
<dbReference type="GO" id="GO:0006730">
    <property type="term" value="P:one-carbon metabolic process"/>
    <property type="evidence" value="ECO:0007669"/>
    <property type="project" value="UniProtKB-UniRule"/>
</dbReference>
<dbReference type="GO" id="GO:0006729">
    <property type="term" value="P:tetrahydrobiopterin biosynthetic process"/>
    <property type="evidence" value="ECO:0007669"/>
    <property type="project" value="TreeGrafter"/>
</dbReference>
<dbReference type="GO" id="GO:0046654">
    <property type="term" value="P:tetrahydrofolate biosynthetic process"/>
    <property type="evidence" value="ECO:0007669"/>
    <property type="project" value="UniProtKB-UniRule"/>
</dbReference>
<dbReference type="CDD" id="cd00642">
    <property type="entry name" value="GTP_cyclohydro1"/>
    <property type="match status" value="1"/>
</dbReference>
<dbReference type="FunFam" id="1.10.286.10:FF:000001">
    <property type="entry name" value="GTP cyclohydrolase 1"/>
    <property type="match status" value="1"/>
</dbReference>
<dbReference type="FunFam" id="3.30.1130.10:FF:000001">
    <property type="entry name" value="GTP cyclohydrolase 1"/>
    <property type="match status" value="1"/>
</dbReference>
<dbReference type="Gene3D" id="1.10.286.10">
    <property type="match status" value="1"/>
</dbReference>
<dbReference type="Gene3D" id="3.30.1130.10">
    <property type="match status" value="1"/>
</dbReference>
<dbReference type="HAMAP" id="MF_00223">
    <property type="entry name" value="FolE"/>
    <property type="match status" value="1"/>
</dbReference>
<dbReference type="InterPro" id="IPR043133">
    <property type="entry name" value="GTP-CH-I_C/QueF"/>
</dbReference>
<dbReference type="InterPro" id="IPR043134">
    <property type="entry name" value="GTP-CH-I_N"/>
</dbReference>
<dbReference type="InterPro" id="IPR001474">
    <property type="entry name" value="GTP_CycHdrlase_I"/>
</dbReference>
<dbReference type="InterPro" id="IPR018234">
    <property type="entry name" value="GTP_CycHdrlase_I_CS"/>
</dbReference>
<dbReference type="InterPro" id="IPR020602">
    <property type="entry name" value="GTP_CycHdrlase_I_dom"/>
</dbReference>
<dbReference type="NCBIfam" id="TIGR00063">
    <property type="entry name" value="folE"/>
    <property type="match status" value="1"/>
</dbReference>
<dbReference type="NCBIfam" id="NF006825">
    <property type="entry name" value="PRK09347.1-2"/>
    <property type="match status" value="1"/>
</dbReference>
<dbReference type="NCBIfam" id="NF006826">
    <property type="entry name" value="PRK09347.1-3"/>
    <property type="match status" value="1"/>
</dbReference>
<dbReference type="PANTHER" id="PTHR11109:SF7">
    <property type="entry name" value="GTP CYCLOHYDROLASE 1"/>
    <property type="match status" value="1"/>
</dbReference>
<dbReference type="PANTHER" id="PTHR11109">
    <property type="entry name" value="GTP CYCLOHYDROLASE I"/>
    <property type="match status" value="1"/>
</dbReference>
<dbReference type="Pfam" id="PF01227">
    <property type="entry name" value="GTP_cyclohydroI"/>
    <property type="match status" value="1"/>
</dbReference>
<dbReference type="SUPFAM" id="SSF55620">
    <property type="entry name" value="Tetrahydrobiopterin biosynthesis enzymes-like"/>
    <property type="match status" value="1"/>
</dbReference>
<dbReference type="PROSITE" id="PS00859">
    <property type="entry name" value="GTP_CYCLOHYDROL_1_1"/>
    <property type="match status" value="1"/>
</dbReference>
<dbReference type="PROSITE" id="PS00860">
    <property type="entry name" value="GTP_CYCLOHYDROL_1_2"/>
    <property type="match status" value="1"/>
</dbReference>
<accession>Q8E549</accession>
<reference key="1">
    <citation type="journal article" date="2002" name="Mol. Microbiol.">
        <title>Genome sequence of Streptococcus agalactiae, a pathogen causing invasive neonatal disease.</title>
        <authorList>
            <person name="Glaser P."/>
            <person name="Rusniok C."/>
            <person name="Buchrieser C."/>
            <person name="Chevalier F."/>
            <person name="Frangeul L."/>
            <person name="Msadek T."/>
            <person name="Zouine M."/>
            <person name="Couve E."/>
            <person name="Lalioui L."/>
            <person name="Poyart C."/>
            <person name="Trieu-Cuot P."/>
            <person name="Kunst F."/>
        </authorList>
    </citation>
    <scope>NUCLEOTIDE SEQUENCE [LARGE SCALE GENOMIC DNA]</scope>
    <source>
        <strain>NEM316</strain>
    </source>
</reference>